<proteinExistence type="evidence at protein level"/>
<evidence type="ECO:0000250" key="1">
    <source>
        <dbReference type="UniProtKB" id="Q5SZA1"/>
    </source>
</evidence>
<evidence type="ECO:0000255" key="2"/>
<evidence type="ECO:0000269" key="3">
    <source>
    </source>
</evidence>
<evidence type="ECO:0000303" key="4">
    <source>
    </source>
</evidence>
<evidence type="ECO:0000303" key="5">
    <source>
    </source>
</evidence>
<evidence type="ECO:0000305" key="6"/>
<keyword id="KW-0025">Alternative splicing</keyword>
<keyword id="KW-1003">Cell membrane</keyword>
<keyword id="KW-0325">Glycoprotein</keyword>
<keyword id="KW-0406">Ion transport</keyword>
<keyword id="KW-0472">Membrane</keyword>
<keyword id="KW-1267">Proteomics identification</keyword>
<keyword id="KW-1185">Reference proteome</keyword>
<keyword id="KW-0915">Sodium</keyword>
<keyword id="KW-0739">Sodium transport</keyword>
<keyword id="KW-0769">Symport</keyword>
<keyword id="KW-0812">Transmembrane</keyword>
<keyword id="KW-1133">Transmembrane helix</keyword>
<keyword id="KW-0813">Transport</keyword>
<organism>
    <name type="scientific">Homo sapiens</name>
    <name type="common">Human</name>
    <dbReference type="NCBI Taxonomy" id="9606"/>
    <lineage>
        <taxon>Eukaryota</taxon>
        <taxon>Metazoa</taxon>
        <taxon>Chordata</taxon>
        <taxon>Craniata</taxon>
        <taxon>Vertebrata</taxon>
        <taxon>Euteleostomi</taxon>
        <taxon>Mammalia</taxon>
        <taxon>Eutheria</taxon>
        <taxon>Euarchontoglires</taxon>
        <taxon>Primates</taxon>
        <taxon>Haplorrhini</taxon>
        <taxon>Catarrhini</taxon>
        <taxon>Hominidae</taxon>
        <taxon>Homo</taxon>
    </lineage>
</organism>
<sequence length="439" mass="47277">MDGKPATRKGPDFCSLRYGLALIMHFSNFTMITQRVSLSIAIIAMVNTTQQQGLSNASTEGPVADAFNNSSISIKEFDTKASVYQWSPETQGIIFSSINYGIILTLIPSGYLAGIFGAKKMLGAGLLISSLLTLFTPLAADFGVILVIMVRTVQGMAQGMAWTGQFTIWAKWAPPLERSKLTTIAGSGSAFGSFIILCVGGLISQALSWPFIFYIFGSTGCVCCLLWFTVIYDDPMHHPCISVREKEHILSSLAQQPSSPGRAVPIKAMVTCLPLWAIFLGFFSHFWLCTIILTYLPTYISTLLHVNIRDSGVLSSLPFIAAASCTILGGQLADFLLSRNLLRLITVRKLFSSLGLLLPSICAVALPFVASSYVITIILLILIPGTSNLCDSGFIINTLDIAPRYASFLMGISRGFGLIAGIISSTATGFLISQVGPVY</sequence>
<protein>
    <recommendedName>
        <fullName>Sodium-dependent phosphate transport protein 3</fullName>
    </recommendedName>
    <alternativeName>
        <fullName>Na(+)/PI cotransporter 3</fullName>
    </alternativeName>
    <alternativeName>
        <fullName>Sodium/phosphate cotransporter 3</fullName>
    </alternativeName>
    <alternativeName>
        <fullName>Solute carrier family 17 member 2</fullName>
    </alternativeName>
</protein>
<gene>
    <name type="primary">SLC17A2</name>
    <name type="synonym">NPT3</name>
</gene>
<reference key="1">
    <citation type="journal article" date="1997" name="Genome Res.">
        <title>A 1.1-Mb transcript map of the hereditary hemochromatosis locus.</title>
        <authorList>
            <person name="Ruddy D.A."/>
            <person name="Kronmal G.S."/>
            <person name="Lee V.K."/>
            <person name="Mintier G.A."/>
            <person name="Quintana L."/>
            <person name="Domingo R. Jr."/>
            <person name="Meyer N.C."/>
            <person name="Irrinki A."/>
            <person name="McClelland E.E."/>
            <person name="Fullan A."/>
            <person name="Mapa F.A."/>
            <person name="Moore T."/>
            <person name="Thomas W."/>
            <person name="Loeb D.B."/>
            <person name="Harmon C."/>
            <person name="Tsuchihashi Z."/>
            <person name="Wolff R.K."/>
            <person name="Schatzman R.C."/>
            <person name="Feder J.N."/>
        </authorList>
    </citation>
    <scope>NUCLEOTIDE SEQUENCE [GENOMIC DNA / MRNA] (ISOFORM 2)</scope>
    <scope>TISSUE SPECIFICITY</scope>
</reference>
<reference key="2">
    <citation type="journal article" date="2003" name="Nature">
        <title>The DNA sequence and analysis of human chromosome 6.</title>
        <authorList>
            <person name="Mungall A.J."/>
            <person name="Palmer S.A."/>
            <person name="Sims S.K."/>
            <person name="Edwards C.A."/>
            <person name="Ashurst J.L."/>
            <person name="Wilming L."/>
            <person name="Jones M.C."/>
            <person name="Horton R."/>
            <person name="Hunt S.E."/>
            <person name="Scott C.E."/>
            <person name="Gilbert J.G.R."/>
            <person name="Clamp M.E."/>
            <person name="Bethel G."/>
            <person name="Milne S."/>
            <person name="Ainscough R."/>
            <person name="Almeida J.P."/>
            <person name="Ambrose K.D."/>
            <person name="Andrews T.D."/>
            <person name="Ashwell R.I.S."/>
            <person name="Babbage A.K."/>
            <person name="Bagguley C.L."/>
            <person name="Bailey J."/>
            <person name="Banerjee R."/>
            <person name="Barker D.J."/>
            <person name="Barlow K.F."/>
            <person name="Bates K."/>
            <person name="Beare D.M."/>
            <person name="Beasley H."/>
            <person name="Beasley O."/>
            <person name="Bird C.P."/>
            <person name="Blakey S.E."/>
            <person name="Bray-Allen S."/>
            <person name="Brook J."/>
            <person name="Brown A.J."/>
            <person name="Brown J.Y."/>
            <person name="Burford D.C."/>
            <person name="Burrill W."/>
            <person name="Burton J."/>
            <person name="Carder C."/>
            <person name="Carter N.P."/>
            <person name="Chapman J.C."/>
            <person name="Clark S.Y."/>
            <person name="Clark G."/>
            <person name="Clee C.M."/>
            <person name="Clegg S."/>
            <person name="Cobley V."/>
            <person name="Collier R.E."/>
            <person name="Collins J.E."/>
            <person name="Colman L.K."/>
            <person name="Corby N.R."/>
            <person name="Coville G.J."/>
            <person name="Culley K.M."/>
            <person name="Dhami P."/>
            <person name="Davies J."/>
            <person name="Dunn M."/>
            <person name="Earthrowl M.E."/>
            <person name="Ellington A.E."/>
            <person name="Evans K.A."/>
            <person name="Faulkner L."/>
            <person name="Francis M.D."/>
            <person name="Frankish A."/>
            <person name="Frankland J."/>
            <person name="French L."/>
            <person name="Garner P."/>
            <person name="Garnett J."/>
            <person name="Ghori M.J."/>
            <person name="Gilby L.M."/>
            <person name="Gillson C.J."/>
            <person name="Glithero R.J."/>
            <person name="Grafham D.V."/>
            <person name="Grant M."/>
            <person name="Gribble S."/>
            <person name="Griffiths C."/>
            <person name="Griffiths M.N.D."/>
            <person name="Hall R."/>
            <person name="Halls K.S."/>
            <person name="Hammond S."/>
            <person name="Harley J.L."/>
            <person name="Hart E.A."/>
            <person name="Heath P.D."/>
            <person name="Heathcott R."/>
            <person name="Holmes S.J."/>
            <person name="Howden P.J."/>
            <person name="Howe K.L."/>
            <person name="Howell G.R."/>
            <person name="Huckle E."/>
            <person name="Humphray S.J."/>
            <person name="Humphries M.D."/>
            <person name="Hunt A.R."/>
            <person name="Johnson C.M."/>
            <person name="Joy A.A."/>
            <person name="Kay M."/>
            <person name="Keenan S.J."/>
            <person name="Kimberley A.M."/>
            <person name="King A."/>
            <person name="Laird G.K."/>
            <person name="Langford C."/>
            <person name="Lawlor S."/>
            <person name="Leongamornlert D.A."/>
            <person name="Leversha M."/>
            <person name="Lloyd C.R."/>
            <person name="Lloyd D.M."/>
            <person name="Loveland J.E."/>
            <person name="Lovell J."/>
            <person name="Martin S."/>
            <person name="Mashreghi-Mohammadi M."/>
            <person name="Maslen G.L."/>
            <person name="Matthews L."/>
            <person name="McCann O.T."/>
            <person name="McLaren S.J."/>
            <person name="McLay K."/>
            <person name="McMurray A."/>
            <person name="Moore M.J.F."/>
            <person name="Mullikin J.C."/>
            <person name="Niblett D."/>
            <person name="Nickerson T."/>
            <person name="Novik K.L."/>
            <person name="Oliver K."/>
            <person name="Overton-Larty E.K."/>
            <person name="Parker A."/>
            <person name="Patel R."/>
            <person name="Pearce A.V."/>
            <person name="Peck A.I."/>
            <person name="Phillimore B.J.C.T."/>
            <person name="Phillips S."/>
            <person name="Plumb R.W."/>
            <person name="Porter K.M."/>
            <person name="Ramsey Y."/>
            <person name="Ranby S.A."/>
            <person name="Rice C.M."/>
            <person name="Ross M.T."/>
            <person name="Searle S.M."/>
            <person name="Sehra H.K."/>
            <person name="Sheridan E."/>
            <person name="Skuce C.D."/>
            <person name="Smith S."/>
            <person name="Smith M."/>
            <person name="Spraggon L."/>
            <person name="Squares S.L."/>
            <person name="Steward C.A."/>
            <person name="Sycamore N."/>
            <person name="Tamlyn-Hall G."/>
            <person name="Tester J."/>
            <person name="Theaker A.J."/>
            <person name="Thomas D.W."/>
            <person name="Thorpe A."/>
            <person name="Tracey A."/>
            <person name="Tromans A."/>
            <person name="Tubby B."/>
            <person name="Wall M."/>
            <person name="Wallis J.M."/>
            <person name="West A.P."/>
            <person name="White S.S."/>
            <person name="Whitehead S.L."/>
            <person name="Whittaker H."/>
            <person name="Wild A."/>
            <person name="Willey D.J."/>
            <person name="Wilmer T.E."/>
            <person name="Wood J.M."/>
            <person name="Wray P.W."/>
            <person name="Wyatt J.C."/>
            <person name="Young L."/>
            <person name="Younger R.M."/>
            <person name="Bentley D.R."/>
            <person name="Coulson A."/>
            <person name="Durbin R.M."/>
            <person name="Hubbard T."/>
            <person name="Sulston J.E."/>
            <person name="Dunham I."/>
            <person name="Rogers J."/>
            <person name="Beck S."/>
        </authorList>
    </citation>
    <scope>NUCLEOTIDE SEQUENCE [LARGE SCALE GENOMIC DNA]</scope>
</reference>
<reference key="3">
    <citation type="submission" date="2005-09" db="EMBL/GenBank/DDBJ databases">
        <authorList>
            <person name="Mural R.J."/>
            <person name="Istrail S."/>
            <person name="Sutton G.G."/>
            <person name="Florea L."/>
            <person name="Halpern A.L."/>
            <person name="Mobarry C.M."/>
            <person name="Lippert R."/>
            <person name="Walenz B."/>
            <person name="Shatkay H."/>
            <person name="Dew I."/>
            <person name="Miller J.R."/>
            <person name="Flanigan M.J."/>
            <person name="Edwards N.J."/>
            <person name="Bolanos R."/>
            <person name="Fasulo D."/>
            <person name="Halldorsson B.V."/>
            <person name="Hannenhalli S."/>
            <person name="Turner R."/>
            <person name="Yooseph S."/>
            <person name="Lu F."/>
            <person name="Nusskern D.R."/>
            <person name="Shue B.C."/>
            <person name="Zheng X.H."/>
            <person name="Zhong F."/>
            <person name="Delcher A.L."/>
            <person name="Huson D.H."/>
            <person name="Kravitz S.A."/>
            <person name="Mouchard L."/>
            <person name="Reinert K."/>
            <person name="Remington K.A."/>
            <person name="Clark A.G."/>
            <person name="Waterman M.S."/>
            <person name="Eichler E.E."/>
            <person name="Adams M.D."/>
            <person name="Hunkapiller M.W."/>
            <person name="Myers E.W."/>
            <person name="Venter J.C."/>
        </authorList>
    </citation>
    <scope>NUCLEOTIDE SEQUENCE [LARGE SCALE GENOMIC DNA]</scope>
</reference>
<reference key="4">
    <citation type="journal article" date="2004" name="Genome Res.">
        <title>The status, quality, and expansion of the NIH full-length cDNA project: the Mammalian Gene Collection (MGC).</title>
        <authorList>
            <consortium name="The MGC Project Team"/>
        </authorList>
    </citation>
    <scope>NUCLEOTIDE SEQUENCE [LARGE SCALE MRNA] (ISOFORMS 2 AND 3)</scope>
    <source>
        <tissue>Liver</tissue>
    </source>
</reference>
<dbReference type="EMBL" id="U91328">
    <property type="protein sequence ID" value="AAB82085.1"/>
    <property type="molecule type" value="Genomic_DNA"/>
</dbReference>
<dbReference type="EMBL" id="U90544">
    <property type="protein sequence ID" value="AAB53422.1"/>
    <property type="molecule type" value="mRNA"/>
</dbReference>
<dbReference type="EMBL" id="AL138726">
    <property type="status" value="NOT_ANNOTATED_CDS"/>
    <property type="molecule type" value="Genomic_DNA"/>
</dbReference>
<dbReference type="EMBL" id="CH471087">
    <property type="protein sequence ID" value="EAW55498.1"/>
    <property type="molecule type" value="Genomic_DNA"/>
</dbReference>
<dbReference type="EMBL" id="CH471087">
    <property type="protein sequence ID" value="EAW55499.1"/>
    <property type="molecule type" value="Genomic_DNA"/>
</dbReference>
<dbReference type="EMBL" id="BC104822">
    <property type="protein sequence ID" value="AAI04823.1"/>
    <property type="molecule type" value="mRNA"/>
</dbReference>
<dbReference type="EMBL" id="BC112033">
    <property type="protein sequence ID" value="AAI12034.1"/>
    <property type="molecule type" value="mRNA"/>
</dbReference>
<dbReference type="EMBL" id="BC143323">
    <property type="status" value="NOT_ANNOTATED_CDS"/>
    <property type="molecule type" value="mRNA"/>
</dbReference>
<dbReference type="CCDS" id="CCDS4567.1">
    <molecule id="O00624-2"/>
</dbReference>
<dbReference type="CCDS" id="CCDS69060.1">
    <molecule id="O00624-3"/>
</dbReference>
<dbReference type="RefSeq" id="NP_001273052.1">
    <molecule id="O00624-3"/>
    <property type="nucleotide sequence ID" value="NM_001286123.3"/>
</dbReference>
<dbReference type="RefSeq" id="NP_001273054.1">
    <property type="nucleotide sequence ID" value="NM_001286125.1"/>
</dbReference>
<dbReference type="RefSeq" id="NP_005826.1">
    <molecule id="O00624-2"/>
    <property type="nucleotide sequence ID" value="NM_005835.4"/>
</dbReference>
<dbReference type="RefSeq" id="XP_005248841.1">
    <property type="nucleotide sequence ID" value="XM_005248784.2"/>
</dbReference>
<dbReference type="RefSeq" id="XP_006715012.1">
    <molecule id="O00624-3"/>
    <property type="nucleotide sequence ID" value="XM_006714949.4"/>
</dbReference>
<dbReference type="RefSeq" id="XP_047274021.1">
    <molecule id="O00624-1"/>
    <property type="nucleotide sequence ID" value="XM_047418065.1"/>
</dbReference>
<dbReference type="RefSeq" id="XP_047274022.1">
    <molecule id="O00624-2"/>
    <property type="nucleotide sequence ID" value="XM_047418066.1"/>
</dbReference>
<dbReference type="RefSeq" id="XP_054209986.1">
    <molecule id="O00624-3"/>
    <property type="nucleotide sequence ID" value="XM_054354011.1"/>
</dbReference>
<dbReference type="RefSeq" id="XP_054209990.1">
    <molecule id="O00624-2"/>
    <property type="nucleotide sequence ID" value="XM_054354015.1"/>
</dbReference>
<dbReference type="SMR" id="O00624"/>
<dbReference type="BioGRID" id="115540">
    <property type="interactions" value="57"/>
</dbReference>
<dbReference type="FunCoup" id="O00624">
    <property type="interactions" value="67"/>
</dbReference>
<dbReference type="IntAct" id="O00624">
    <property type="interactions" value="55"/>
</dbReference>
<dbReference type="STRING" id="9606.ENSP00000367081"/>
<dbReference type="ChEMBL" id="CHEMBL3769300"/>
<dbReference type="TCDB" id="2.A.1.14.29">
    <property type="family name" value="the major facilitator superfamily (mfs)"/>
</dbReference>
<dbReference type="GlyCosmos" id="O00624">
    <property type="glycosylation" value="4 sites, No reported glycans"/>
</dbReference>
<dbReference type="GlyGen" id="O00624">
    <property type="glycosylation" value="5 sites, 1 O-linked glycan (1 site)"/>
</dbReference>
<dbReference type="PhosphoSitePlus" id="O00624"/>
<dbReference type="BioMuta" id="SLC17A2"/>
<dbReference type="jPOST" id="O00624"/>
<dbReference type="MassIVE" id="O00624"/>
<dbReference type="PaxDb" id="9606-ENSP00000367081"/>
<dbReference type="PeptideAtlas" id="O00624"/>
<dbReference type="Antibodypedia" id="25472">
    <property type="antibodies" value="88 antibodies from 23 providers"/>
</dbReference>
<dbReference type="DNASU" id="10246"/>
<dbReference type="Ensembl" id="ENST00000265425.3">
    <molecule id="O00624-1"/>
    <property type="protein sequence ID" value="ENSP00000265425.3"/>
    <property type="gene ID" value="ENSG00000112337.11"/>
</dbReference>
<dbReference type="Ensembl" id="ENST00000360488.7">
    <molecule id="O00624-2"/>
    <property type="protein sequence ID" value="ENSP00000353677.3"/>
    <property type="gene ID" value="ENSG00000112337.11"/>
</dbReference>
<dbReference type="Ensembl" id="ENST00000377850.8">
    <molecule id="O00624-3"/>
    <property type="protein sequence ID" value="ENSP00000367081.3"/>
    <property type="gene ID" value="ENSG00000112337.11"/>
</dbReference>
<dbReference type="GeneID" id="10246"/>
<dbReference type="KEGG" id="hsa:10246"/>
<dbReference type="MANE-Select" id="ENST00000377850.8">
    <molecule id="O00624-3"/>
    <property type="protein sequence ID" value="ENSP00000367081.3"/>
    <property type="RefSeq nucleotide sequence ID" value="NM_001286123.3"/>
    <property type="RefSeq protein sequence ID" value="NP_001273052.1"/>
</dbReference>
<dbReference type="UCSC" id="uc003nfl.5">
    <molecule id="O00624-1"/>
    <property type="organism name" value="human"/>
</dbReference>
<dbReference type="AGR" id="HGNC:10930"/>
<dbReference type="CTD" id="10246"/>
<dbReference type="DisGeNET" id="10246"/>
<dbReference type="GeneCards" id="SLC17A2"/>
<dbReference type="HGNC" id="HGNC:10930">
    <property type="gene designation" value="SLC17A2"/>
</dbReference>
<dbReference type="HPA" id="ENSG00000112337">
    <property type="expression patterns" value="Tissue enriched (liver)"/>
</dbReference>
<dbReference type="MIM" id="611049">
    <property type="type" value="gene"/>
</dbReference>
<dbReference type="neXtProt" id="NX_O00624"/>
<dbReference type="OpenTargets" id="ENSG00000112337"/>
<dbReference type="PharmGKB" id="PA35821"/>
<dbReference type="VEuPathDB" id="HostDB:ENSG00000112337"/>
<dbReference type="eggNOG" id="KOG2532">
    <property type="taxonomic scope" value="Eukaryota"/>
</dbReference>
<dbReference type="GeneTree" id="ENSGT00940000161926"/>
<dbReference type="HOGENOM" id="CLU_001265_5_0_1"/>
<dbReference type="InParanoid" id="O00624"/>
<dbReference type="OMA" id="MRGTWAF"/>
<dbReference type="OrthoDB" id="2985014at2759"/>
<dbReference type="PAN-GO" id="O00624">
    <property type="GO annotations" value="4 GO annotations based on evolutionary models"/>
</dbReference>
<dbReference type="PhylomeDB" id="O00624"/>
<dbReference type="TreeFam" id="TF313535"/>
<dbReference type="PathwayCommons" id="O00624"/>
<dbReference type="SignaLink" id="O00624"/>
<dbReference type="BioGRID-ORCS" id="10246">
    <property type="hits" value="8 hits in 1133 CRISPR screens"/>
</dbReference>
<dbReference type="GenomeRNAi" id="10246"/>
<dbReference type="Pharos" id="O00624">
    <property type="development level" value="Tdark"/>
</dbReference>
<dbReference type="PRO" id="PR:O00624"/>
<dbReference type="Proteomes" id="UP000005640">
    <property type="component" value="Chromosome 6"/>
</dbReference>
<dbReference type="RNAct" id="O00624">
    <property type="molecule type" value="protein"/>
</dbReference>
<dbReference type="Bgee" id="ENSG00000112337">
    <property type="expression patterns" value="Expressed in right lobe of liver and 18 other cell types or tissues"/>
</dbReference>
<dbReference type="ExpressionAtlas" id="O00624">
    <property type="expression patterns" value="baseline and differential"/>
</dbReference>
<dbReference type="GO" id="GO:0016324">
    <property type="term" value="C:apical plasma membrane"/>
    <property type="evidence" value="ECO:0000250"/>
    <property type="project" value="UniProtKB"/>
</dbReference>
<dbReference type="GO" id="GO:0016020">
    <property type="term" value="C:membrane"/>
    <property type="evidence" value="ECO:0000304"/>
    <property type="project" value="ProtInc"/>
</dbReference>
<dbReference type="GO" id="GO:0005886">
    <property type="term" value="C:plasma membrane"/>
    <property type="evidence" value="ECO:0000304"/>
    <property type="project" value="ProtInc"/>
</dbReference>
<dbReference type="GO" id="GO:0005436">
    <property type="term" value="F:sodium:phosphate symporter activity"/>
    <property type="evidence" value="ECO:0000304"/>
    <property type="project" value="ProtInc"/>
</dbReference>
<dbReference type="GO" id="GO:0022857">
    <property type="term" value="F:transmembrane transporter activity"/>
    <property type="evidence" value="ECO:0000318"/>
    <property type="project" value="GO_Central"/>
</dbReference>
<dbReference type="GO" id="GO:0015143">
    <property type="term" value="F:urate transmembrane transporter activity"/>
    <property type="evidence" value="ECO:0000250"/>
    <property type="project" value="UniProtKB"/>
</dbReference>
<dbReference type="GO" id="GO:0006796">
    <property type="term" value="P:phosphate-containing compound metabolic process"/>
    <property type="evidence" value="ECO:0000304"/>
    <property type="project" value="ProtInc"/>
</dbReference>
<dbReference type="GO" id="GO:0006814">
    <property type="term" value="P:sodium ion transport"/>
    <property type="evidence" value="ECO:0000304"/>
    <property type="project" value="ProtInc"/>
</dbReference>
<dbReference type="CDD" id="cd17318">
    <property type="entry name" value="MFS_SLC17"/>
    <property type="match status" value="1"/>
</dbReference>
<dbReference type="FunFam" id="1.20.1250.20:FF:000003">
    <property type="entry name" value="Solute carrier family 17 member 3"/>
    <property type="match status" value="1"/>
</dbReference>
<dbReference type="FunFam" id="1.20.1250.20:FF:000060">
    <property type="entry name" value="Solute carrier family 17 member 3"/>
    <property type="match status" value="1"/>
</dbReference>
<dbReference type="Gene3D" id="1.20.1250.20">
    <property type="entry name" value="MFS general substrate transporter like domains"/>
    <property type="match status" value="2"/>
</dbReference>
<dbReference type="InterPro" id="IPR011701">
    <property type="entry name" value="MFS"/>
</dbReference>
<dbReference type="InterPro" id="IPR020846">
    <property type="entry name" value="MFS_dom"/>
</dbReference>
<dbReference type="InterPro" id="IPR050382">
    <property type="entry name" value="MFS_Na/Anion_cotransporter"/>
</dbReference>
<dbReference type="InterPro" id="IPR036259">
    <property type="entry name" value="MFS_trans_sf"/>
</dbReference>
<dbReference type="PANTHER" id="PTHR11662:SF193">
    <property type="entry name" value="SODIUM-DEPENDENT PHOSPHATE TRANSPORT PROTEIN 3"/>
    <property type="match status" value="1"/>
</dbReference>
<dbReference type="PANTHER" id="PTHR11662">
    <property type="entry name" value="SOLUTE CARRIER FAMILY 17"/>
    <property type="match status" value="1"/>
</dbReference>
<dbReference type="Pfam" id="PF07690">
    <property type="entry name" value="MFS_1"/>
    <property type="match status" value="1"/>
</dbReference>
<dbReference type="SUPFAM" id="SSF103473">
    <property type="entry name" value="MFS general substrate transporter"/>
    <property type="match status" value="1"/>
</dbReference>
<dbReference type="PROSITE" id="PS50850">
    <property type="entry name" value="MFS"/>
    <property type="match status" value="1"/>
</dbReference>
<accession>O00624</accession>
<accession>A6NK81</accession>
<accession>A6NLD6</accession>
<accession>Q5TB84</accession>
<accession>Q76P85</accession>
<comment type="function">
    <text evidence="1">Acts as a membrane potential-dependent organic anion transporter, the transport requires a low concentration of chloride ions (By similarity). Mediates chloride-dependent transport of urate (By similarity). Can actively transport inorganic phosphate into cells via Na(+) cotransport (By similarity).</text>
</comment>
<comment type="catalytic activity">
    <reaction evidence="1">
        <text>3 Na(+)(out) + phosphate(out) = 3 Na(+)(in) + phosphate(in)</text>
        <dbReference type="Rhea" id="RHEA:71255"/>
        <dbReference type="ChEBI" id="CHEBI:29101"/>
        <dbReference type="ChEBI" id="CHEBI:43474"/>
    </reaction>
</comment>
<comment type="catalytic activity">
    <reaction evidence="1">
        <text>urate(out) + n chloride(in) = urate(in) + n chloride(out)</text>
        <dbReference type="Rhea" id="RHEA:72319"/>
        <dbReference type="ChEBI" id="CHEBI:17775"/>
        <dbReference type="ChEBI" id="CHEBI:17996"/>
    </reaction>
</comment>
<comment type="subcellular location">
    <subcellularLocation>
        <location evidence="1">Apical cell membrane</location>
        <topology evidence="2">Multi-pass membrane protein</topology>
    </subcellularLocation>
</comment>
<comment type="alternative products">
    <event type="alternative splicing"/>
    <isoform>
        <id>O00624-1</id>
        <name>1</name>
        <sequence type="displayed"/>
    </isoform>
    <isoform>
        <id>O00624-2</id>
        <name>2</name>
        <sequence type="described" ref="VSP_020638"/>
    </isoform>
    <isoform>
        <id>O00624-3</id>
        <name>3</name>
        <sequence type="described" ref="VSP_054712"/>
    </isoform>
</comment>
<comment type="tissue specificity">
    <text evidence="3">Expressed in the small intestine, kidney, spleen and testis. Not detected in fetal brain, bone marrow, and mammary gland.</text>
</comment>
<comment type="similarity">
    <text evidence="6">Belongs to the major facilitator superfamily. Sodium/anion cotransporter family.</text>
</comment>
<name>NPT3_HUMAN</name>
<feature type="chain" id="PRO_0000220940" description="Sodium-dependent phosphate transport protein 3">
    <location>
        <begin position="1"/>
        <end position="439"/>
    </location>
</feature>
<feature type="transmembrane region" description="Helical" evidence="2">
    <location>
        <begin position="98"/>
        <end position="118"/>
    </location>
</feature>
<feature type="transmembrane region" description="Helical" evidence="2">
    <location>
        <begin position="130"/>
        <end position="150"/>
    </location>
</feature>
<feature type="transmembrane region" description="Helical" evidence="2">
    <location>
        <begin position="183"/>
        <end position="203"/>
    </location>
</feature>
<feature type="transmembrane region" description="Helical" evidence="2">
    <location>
        <begin position="211"/>
        <end position="231"/>
    </location>
</feature>
<feature type="transmembrane region" description="Helical" evidence="2">
    <location>
        <begin position="273"/>
        <end position="293"/>
    </location>
</feature>
<feature type="transmembrane region" description="Helical" evidence="2">
    <location>
        <begin position="317"/>
        <end position="337"/>
    </location>
</feature>
<feature type="transmembrane region" description="Helical" evidence="2">
    <location>
        <begin position="350"/>
        <end position="369"/>
    </location>
</feature>
<feature type="transmembrane region" description="Helical" evidence="2">
    <location>
        <begin position="374"/>
        <end position="396"/>
    </location>
</feature>
<feature type="transmembrane region" description="Helical" evidence="2">
    <location>
        <begin position="415"/>
        <end position="435"/>
    </location>
</feature>
<feature type="glycosylation site" description="N-linked (GlcNAc...) asparagine" evidence="2">
    <location>
        <position position="47"/>
    </location>
</feature>
<feature type="glycosylation site" description="N-linked (GlcNAc...) asparagine" evidence="2">
    <location>
        <position position="56"/>
    </location>
</feature>
<feature type="glycosylation site" description="N-linked (GlcNAc...) asparagine" evidence="2">
    <location>
        <position position="68"/>
    </location>
</feature>
<feature type="glycosylation site" description="N-linked (GlcNAc...) asparagine" evidence="2">
    <location>
        <position position="69"/>
    </location>
</feature>
<feature type="splice variant" id="VSP_020638" description="In isoform 2." evidence="4 5">
    <original>GLLLPSICAVALPFVASSYVITIILLILIPGTSNLCDSGFIINTLDIAPRYASFLMGISRGFGLIAGIISSTATGFLISQVGPVY</original>
    <variation>DMQVSSWESQGDLGSSQESSLPLPLDSSSVRILSLVGGMSFSCLLQSTCLAWSFTSRLDKQNFKTGPKRGPLPASEDIKLQT</variation>
    <location>
        <begin position="355"/>
        <end position="439"/>
    </location>
</feature>
<feature type="splice variant" id="VSP_054712" description="In isoform 3." evidence="4">
    <original>VGPVY</original>
    <variation>DFESGWRNVFFLSAAVNMFGLVFYLTFGQAELQDWAKERTLTRL</variation>
    <location>
        <begin position="435"/>
        <end position="439"/>
    </location>
</feature>